<organism>
    <name type="scientific">Yarrowia lipolytica (strain CLIB 122 / E 150)</name>
    <name type="common">Yeast</name>
    <name type="synonym">Candida lipolytica</name>
    <dbReference type="NCBI Taxonomy" id="284591"/>
    <lineage>
        <taxon>Eukaryota</taxon>
        <taxon>Fungi</taxon>
        <taxon>Dikarya</taxon>
        <taxon>Ascomycota</taxon>
        <taxon>Saccharomycotina</taxon>
        <taxon>Dipodascomycetes</taxon>
        <taxon>Dipodascales</taxon>
        <taxon>Dipodascales incertae sedis</taxon>
        <taxon>Yarrowia</taxon>
    </lineage>
</organism>
<feature type="chain" id="PRO_0000406624" description="Enhancer of translation termination 1">
    <location>
        <begin position="1"/>
        <end position="377"/>
    </location>
</feature>
<feature type="region of interest" description="Disordered" evidence="2">
    <location>
        <begin position="1"/>
        <end position="72"/>
    </location>
</feature>
<feature type="compositionally biased region" description="Basic and acidic residues" evidence="2">
    <location>
        <begin position="19"/>
        <end position="34"/>
    </location>
</feature>
<accession>Q6C872</accession>
<sequence>MAKRPLGLNKANKSKKKKLDSAEKAEKAVAKEISPENDESAEPAPALTLDADEEDDMGQLESLYKNWTSSERDSPRILHGVVHECDSLLQKAKGEGLPARFHEIYAASLLDLAEFADKKKPVKKKKVKSDDVAPETSDMFVDAALERVETGLEQYPEDAGLLFVKSRALKQDIDEKMSAVSKEERKETAKKMISQLNKILEVFKLAQKHASTVTPAQLDVVEELIELSGALESVVKQSDISETTLVACEKFYNEILASEKDENTVKKAHRGVGTCKMIVADSLLDLLDDDDEDNDDTVELAKKNLKAAIEHFQKSETDEDGEFMVTLAETMIQYGNLFETESDDQKKWYGEAVKRLRQAQRLGVGKYDEMILELEDD</sequence>
<evidence type="ECO:0000250" key="1"/>
<evidence type="ECO:0000256" key="2">
    <source>
        <dbReference type="SAM" id="MobiDB-lite"/>
    </source>
</evidence>
<evidence type="ECO:0000305" key="3"/>
<protein>
    <recommendedName>
        <fullName>Enhancer of translation termination 1</fullName>
    </recommendedName>
</protein>
<name>ETT1_YARLI</name>
<keyword id="KW-0539">Nucleus</keyword>
<keyword id="KW-1185">Reference proteome</keyword>
<keyword id="KW-0804">Transcription</keyword>
<keyword id="KW-0805">Transcription regulation</keyword>
<keyword id="KW-0810">Translation regulation</keyword>
<gene>
    <name type="primary">ETT1</name>
    <name type="ordered locus">YALI0D22132g</name>
</gene>
<comment type="function">
    <text evidence="1">Required for correct translation termination and probably involved in regulation of hypoxic gene expression.</text>
</comment>
<comment type="subcellular location">
    <subcellularLocation>
        <location evidence="1">Nucleus</location>
    </subcellularLocation>
</comment>
<comment type="similarity">
    <text evidence="3">Belongs to the ETT1 family.</text>
</comment>
<proteinExistence type="inferred from homology"/>
<dbReference type="EMBL" id="CR382130">
    <property type="protein sequence ID" value="CAG81338.1"/>
    <property type="molecule type" value="Genomic_DNA"/>
</dbReference>
<dbReference type="RefSeq" id="XP_503140.1">
    <property type="nucleotide sequence ID" value="XM_503140.1"/>
</dbReference>
<dbReference type="SMR" id="Q6C872"/>
<dbReference type="FunCoup" id="Q6C872">
    <property type="interactions" value="90"/>
</dbReference>
<dbReference type="STRING" id="284591.Q6C872"/>
<dbReference type="EnsemblFungi" id="CAG81338">
    <property type="protein sequence ID" value="CAG81338"/>
    <property type="gene ID" value="YALI0_D22132g"/>
</dbReference>
<dbReference type="KEGG" id="yli:2911046"/>
<dbReference type="VEuPathDB" id="FungiDB:YALI0_D22132g"/>
<dbReference type="HOGENOM" id="CLU_050427_0_0_1"/>
<dbReference type="InParanoid" id="Q6C872"/>
<dbReference type="OrthoDB" id="119592at4891"/>
<dbReference type="Proteomes" id="UP000001300">
    <property type="component" value="Chromosome D"/>
</dbReference>
<dbReference type="GO" id="GO:0005634">
    <property type="term" value="C:nucleus"/>
    <property type="evidence" value="ECO:0000318"/>
    <property type="project" value="GO_Central"/>
</dbReference>
<dbReference type="GO" id="GO:2000640">
    <property type="term" value="P:positive regulation of SREBP signaling pathway"/>
    <property type="evidence" value="ECO:0000318"/>
    <property type="project" value="GO_Central"/>
</dbReference>
<dbReference type="GO" id="GO:0006417">
    <property type="term" value="P:regulation of translation"/>
    <property type="evidence" value="ECO:0007669"/>
    <property type="project" value="UniProtKB-KW"/>
</dbReference>
<dbReference type="InterPro" id="IPR024318">
    <property type="entry name" value="Nro1/ETT1"/>
</dbReference>
<dbReference type="PANTHER" id="PTHR28290">
    <property type="entry name" value="ENHANCER OF TRANSLATION TERMINATION 1"/>
    <property type="match status" value="1"/>
</dbReference>
<dbReference type="PANTHER" id="PTHR28290:SF1">
    <property type="entry name" value="ENHANCER OF TRANSLATION TERMINATION 1"/>
    <property type="match status" value="1"/>
</dbReference>
<dbReference type="Pfam" id="PF12753">
    <property type="entry name" value="Nro1"/>
    <property type="match status" value="2"/>
</dbReference>
<reference key="1">
    <citation type="journal article" date="2004" name="Nature">
        <title>Genome evolution in yeasts.</title>
        <authorList>
            <person name="Dujon B."/>
            <person name="Sherman D."/>
            <person name="Fischer G."/>
            <person name="Durrens P."/>
            <person name="Casaregola S."/>
            <person name="Lafontaine I."/>
            <person name="de Montigny J."/>
            <person name="Marck C."/>
            <person name="Neuveglise C."/>
            <person name="Talla E."/>
            <person name="Goffard N."/>
            <person name="Frangeul L."/>
            <person name="Aigle M."/>
            <person name="Anthouard V."/>
            <person name="Babour A."/>
            <person name="Barbe V."/>
            <person name="Barnay S."/>
            <person name="Blanchin S."/>
            <person name="Beckerich J.-M."/>
            <person name="Beyne E."/>
            <person name="Bleykasten C."/>
            <person name="Boisrame A."/>
            <person name="Boyer J."/>
            <person name="Cattolico L."/>
            <person name="Confanioleri F."/>
            <person name="de Daruvar A."/>
            <person name="Despons L."/>
            <person name="Fabre E."/>
            <person name="Fairhead C."/>
            <person name="Ferry-Dumazet H."/>
            <person name="Groppi A."/>
            <person name="Hantraye F."/>
            <person name="Hennequin C."/>
            <person name="Jauniaux N."/>
            <person name="Joyet P."/>
            <person name="Kachouri R."/>
            <person name="Kerrest A."/>
            <person name="Koszul R."/>
            <person name="Lemaire M."/>
            <person name="Lesur I."/>
            <person name="Ma L."/>
            <person name="Muller H."/>
            <person name="Nicaud J.-M."/>
            <person name="Nikolski M."/>
            <person name="Oztas S."/>
            <person name="Ozier-Kalogeropoulos O."/>
            <person name="Pellenz S."/>
            <person name="Potier S."/>
            <person name="Richard G.-F."/>
            <person name="Straub M.-L."/>
            <person name="Suleau A."/>
            <person name="Swennen D."/>
            <person name="Tekaia F."/>
            <person name="Wesolowski-Louvel M."/>
            <person name="Westhof E."/>
            <person name="Wirth B."/>
            <person name="Zeniou-Meyer M."/>
            <person name="Zivanovic Y."/>
            <person name="Bolotin-Fukuhara M."/>
            <person name="Thierry A."/>
            <person name="Bouchier C."/>
            <person name="Caudron B."/>
            <person name="Scarpelli C."/>
            <person name="Gaillardin C."/>
            <person name="Weissenbach J."/>
            <person name="Wincker P."/>
            <person name="Souciet J.-L."/>
        </authorList>
    </citation>
    <scope>NUCLEOTIDE SEQUENCE [LARGE SCALE GENOMIC DNA]</scope>
    <source>
        <strain>CLIB 122 / E 150</strain>
    </source>
</reference>